<evidence type="ECO:0000250" key="1"/>
<evidence type="ECO:0000305" key="2"/>
<keyword id="KW-0456">Lyase</keyword>
<keyword id="KW-0479">Metal-binding</keyword>
<keyword id="KW-1185">Reference proteome</keyword>
<keyword id="KW-0862">Zinc</keyword>
<dbReference type="EC" id="4.2.1.1"/>
<dbReference type="EMBL" id="AE004091">
    <property type="protein sequence ID" value="AAG05441.1"/>
    <property type="molecule type" value="Genomic_DNA"/>
</dbReference>
<dbReference type="PIR" id="D83390">
    <property type="entry name" value="D83390"/>
</dbReference>
<dbReference type="RefSeq" id="NP_250743.1">
    <property type="nucleotide sequence ID" value="NC_002516.2"/>
</dbReference>
<dbReference type="RefSeq" id="WP_003107081.1">
    <property type="nucleotide sequence ID" value="NZ_QZGE01000022.1"/>
</dbReference>
<dbReference type="SMR" id="Q9I262"/>
<dbReference type="FunCoup" id="Q9I262">
    <property type="interactions" value="393"/>
</dbReference>
<dbReference type="STRING" id="208964.PA2053"/>
<dbReference type="PaxDb" id="208964-PA2053"/>
<dbReference type="DNASU" id="878074"/>
<dbReference type="GeneID" id="878074"/>
<dbReference type="KEGG" id="pae:PA2053"/>
<dbReference type="PATRIC" id="fig|208964.12.peg.2141"/>
<dbReference type="PseudoCAP" id="PA2053"/>
<dbReference type="HOGENOM" id="CLU_053879_5_3_6"/>
<dbReference type="InParanoid" id="Q9I262"/>
<dbReference type="OrthoDB" id="9797527at2"/>
<dbReference type="PhylomeDB" id="Q9I262"/>
<dbReference type="BioCyc" id="PAER208964:G1FZ6-2091-MONOMER"/>
<dbReference type="Proteomes" id="UP000002438">
    <property type="component" value="Chromosome"/>
</dbReference>
<dbReference type="GO" id="GO:0004089">
    <property type="term" value="F:carbonate dehydratase activity"/>
    <property type="evidence" value="ECO:0000314"/>
    <property type="project" value="PseudoCAP"/>
</dbReference>
<dbReference type="GO" id="GO:0008270">
    <property type="term" value="F:zinc ion binding"/>
    <property type="evidence" value="ECO:0000314"/>
    <property type="project" value="PseudoCAP"/>
</dbReference>
<dbReference type="GO" id="GO:0015976">
    <property type="term" value="P:carbon utilization"/>
    <property type="evidence" value="ECO:0007669"/>
    <property type="project" value="InterPro"/>
</dbReference>
<dbReference type="GO" id="GO:0009440">
    <property type="term" value="P:cyanate catabolic process"/>
    <property type="evidence" value="ECO:0000318"/>
    <property type="project" value="GO_Central"/>
</dbReference>
<dbReference type="CDD" id="cd00884">
    <property type="entry name" value="beta_CA_cladeB"/>
    <property type="match status" value="1"/>
</dbReference>
<dbReference type="FunFam" id="3.40.1050.10:FF:000003">
    <property type="entry name" value="Carbonic anhydrase"/>
    <property type="match status" value="1"/>
</dbReference>
<dbReference type="Gene3D" id="3.40.1050.10">
    <property type="entry name" value="Carbonic anhydrase"/>
    <property type="match status" value="1"/>
</dbReference>
<dbReference type="InterPro" id="IPR045066">
    <property type="entry name" value="Beta_CA_cladeB"/>
</dbReference>
<dbReference type="InterPro" id="IPR001765">
    <property type="entry name" value="Carbonic_anhydrase"/>
</dbReference>
<dbReference type="InterPro" id="IPR015892">
    <property type="entry name" value="Carbonic_anhydrase_CS"/>
</dbReference>
<dbReference type="InterPro" id="IPR036874">
    <property type="entry name" value="Carbonic_anhydrase_sf"/>
</dbReference>
<dbReference type="PANTHER" id="PTHR11002">
    <property type="entry name" value="CARBONIC ANHYDRASE"/>
    <property type="match status" value="1"/>
</dbReference>
<dbReference type="PANTHER" id="PTHR11002:SF42">
    <property type="entry name" value="CARBONIC ANHYDRASE 1"/>
    <property type="match status" value="1"/>
</dbReference>
<dbReference type="Pfam" id="PF00484">
    <property type="entry name" value="Pro_CA"/>
    <property type="match status" value="1"/>
</dbReference>
<dbReference type="SMART" id="SM00947">
    <property type="entry name" value="Pro_CA"/>
    <property type="match status" value="1"/>
</dbReference>
<dbReference type="SUPFAM" id="SSF53056">
    <property type="entry name" value="beta-carbonic anhydrase, cab"/>
    <property type="match status" value="1"/>
</dbReference>
<dbReference type="PROSITE" id="PS00704">
    <property type="entry name" value="PROK_CO2_ANHYDRASE_1"/>
    <property type="match status" value="1"/>
</dbReference>
<dbReference type="PROSITE" id="PS00705">
    <property type="entry name" value="PROK_CO2_ANHYDRASE_2"/>
    <property type="match status" value="1"/>
</dbReference>
<sequence>MRDIIDGFLRFQRDAYPARSQLFKSLATRQAPKALFIACSDSRVVPELLTQREPGELFVIRNAGNIVPGYGPQPGGVSASVEYAVAVLGVGDIVVCGHSDCGAMGAIASCACLDQLPAVAGWLHHAEAARAMNSAHEHASEAARLDALVRHNVIAQLANLRTHPCVARALEQGRLNLHGWVYDIESGRIDALDGASRRFVSLAEHPEVRAVGGEPGQAVA</sequence>
<feature type="chain" id="PRO_0000287738" description="Carbonic anhydrase">
    <location>
        <begin position="1"/>
        <end position="220"/>
    </location>
</feature>
<feature type="binding site" evidence="1">
    <location>
        <position position="39"/>
    </location>
    <ligand>
        <name>Zn(2+)</name>
        <dbReference type="ChEBI" id="CHEBI:29105"/>
    </ligand>
</feature>
<feature type="binding site" evidence="1">
    <location>
        <position position="41"/>
    </location>
    <ligand>
        <name>Zn(2+)</name>
        <dbReference type="ChEBI" id="CHEBI:29105"/>
    </ligand>
</feature>
<feature type="binding site" evidence="1">
    <location>
        <position position="98"/>
    </location>
    <ligand>
        <name>Zn(2+)</name>
        <dbReference type="ChEBI" id="CHEBI:29105"/>
    </ligand>
</feature>
<feature type="binding site" evidence="1">
    <location>
        <position position="101"/>
    </location>
    <ligand>
        <name>Zn(2+)</name>
        <dbReference type="ChEBI" id="CHEBI:29105"/>
    </ligand>
</feature>
<reference key="1">
    <citation type="journal article" date="2000" name="Nature">
        <title>Complete genome sequence of Pseudomonas aeruginosa PAO1, an opportunistic pathogen.</title>
        <authorList>
            <person name="Stover C.K."/>
            <person name="Pham X.-Q.T."/>
            <person name="Erwin A.L."/>
            <person name="Mizoguchi S.D."/>
            <person name="Warrener P."/>
            <person name="Hickey M.J."/>
            <person name="Brinkman F.S.L."/>
            <person name="Hufnagle W.O."/>
            <person name="Kowalik D.J."/>
            <person name="Lagrou M."/>
            <person name="Garber R.L."/>
            <person name="Goltry L."/>
            <person name="Tolentino E."/>
            <person name="Westbrock-Wadman S."/>
            <person name="Yuan Y."/>
            <person name="Brody L.L."/>
            <person name="Coulter S.N."/>
            <person name="Folger K.R."/>
            <person name="Kas A."/>
            <person name="Larbig K."/>
            <person name="Lim R.M."/>
            <person name="Smith K.A."/>
            <person name="Spencer D.H."/>
            <person name="Wong G.K.-S."/>
            <person name="Wu Z."/>
            <person name="Paulsen I.T."/>
            <person name="Reizer J."/>
            <person name="Saier M.H. Jr."/>
            <person name="Hancock R.E.W."/>
            <person name="Lory S."/>
            <person name="Olson M.V."/>
        </authorList>
    </citation>
    <scope>NUCLEOTIDE SEQUENCE [LARGE SCALE GENOMIC DNA]</scope>
    <source>
        <strain>ATCC 15692 / DSM 22644 / CIP 104116 / JCM 14847 / LMG 12228 / 1C / PRS 101 / PAO1</strain>
    </source>
</reference>
<name>CYNT_PSEAE</name>
<proteinExistence type="inferred from homology"/>
<comment type="catalytic activity">
    <reaction>
        <text>hydrogencarbonate + H(+) = CO2 + H2O</text>
        <dbReference type="Rhea" id="RHEA:10748"/>
        <dbReference type="ChEBI" id="CHEBI:15377"/>
        <dbReference type="ChEBI" id="CHEBI:15378"/>
        <dbReference type="ChEBI" id="CHEBI:16526"/>
        <dbReference type="ChEBI" id="CHEBI:17544"/>
        <dbReference type="EC" id="4.2.1.1"/>
    </reaction>
</comment>
<comment type="cofactor">
    <cofactor evidence="1">
        <name>Zn(2+)</name>
        <dbReference type="ChEBI" id="CHEBI:29105"/>
    </cofactor>
    <text evidence="1">Binds 1 zinc ion per subunit.</text>
</comment>
<comment type="similarity">
    <text evidence="2">Belongs to the beta-class carbonic anhydrase family.</text>
</comment>
<protein>
    <recommendedName>
        <fullName>Carbonic anhydrase</fullName>
        <ecNumber>4.2.1.1</ecNumber>
    </recommendedName>
    <alternativeName>
        <fullName>Carbonate dehydratase</fullName>
    </alternativeName>
</protein>
<accession>Q9I262</accession>
<organism>
    <name type="scientific">Pseudomonas aeruginosa (strain ATCC 15692 / DSM 22644 / CIP 104116 / JCM 14847 / LMG 12228 / 1C / PRS 101 / PAO1)</name>
    <dbReference type="NCBI Taxonomy" id="208964"/>
    <lineage>
        <taxon>Bacteria</taxon>
        <taxon>Pseudomonadati</taxon>
        <taxon>Pseudomonadota</taxon>
        <taxon>Gammaproteobacteria</taxon>
        <taxon>Pseudomonadales</taxon>
        <taxon>Pseudomonadaceae</taxon>
        <taxon>Pseudomonas</taxon>
    </lineage>
</organism>
<gene>
    <name type="primary">cynT</name>
    <name type="ordered locus">PA2053</name>
</gene>